<dbReference type="EC" id="1.4.3.3" evidence="4"/>
<dbReference type="EMBL" id="BA000040">
    <property type="protein sequence ID" value="BAC52077.1"/>
    <property type="molecule type" value="Genomic_DNA"/>
</dbReference>
<dbReference type="RefSeq" id="NP_773452.1">
    <property type="nucleotide sequence ID" value="NC_004463.1"/>
</dbReference>
<dbReference type="RefSeq" id="WP_011089551.1">
    <property type="nucleotide sequence ID" value="NC_004463.1"/>
</dbReference>
<dbReference type="SMR" id="Q89F89"/>
<dbReference type="STRING" id="224911.27355093"/>
<dbReference type="EnsemblBacteria" id="BAC52077">
    <property type="protein sequence ID" value="BAC52077"/>
    <property type="gene ID" value="BAC52077"/>
</dbReference>
<dbReference type="GeneID" id="46493785"/>
<dbReference type="KEGG" id="bja:bll6812"/>
<dbReference type="PATRIC" id="fig|224911.44.peg.6840"/>
<dbReference type="eggNOG" id="COG0665">
    <property type="taxonomic scope" value="Bacteria"/>
</dbReference>
<dbReference type="HOGENOM" id="CLU_007884_9_0_5"/>
<dbReference type="InParanoid" id="Q89F89"/>
<dbReference type="OrthoDB" id="9805337at2"/>
<dbReference type="PhylomeDB" id="Q89F89"/>
<dbReference type="Proteomes" id="UP000002526">
    <property type="component" value="Chromosome"/>
</dbReference>
<dbReference type="GO" id="GO:0005737">
    <property type="term" value="C:cytoplasm"/>
    <property type="evidence" value="ECO:0000250"/>
    <property type="project" value="UniProtKB"/>
</dbReference>
<dbReference type="GO" id="GO:0005576">
    <property type="term" value="C:extracellular region"/>
    <property type="evidence" value="ECO:0007669"/>
    <property type="project" value="UniProtKB-KW"/>
</dbReference>
<dbReference type="GO" id="GO:0009274">
    <property type="term" value="C:peptidoglycan-based cell wall"/>
    <property type="evidence" value="ECO:0000250"/>
    <property type="project" value="UniProtKB"/>
</dbReference>
<dbReference type="GO" id="GO:0003884">
    <property type="term" value="F:D-amino-acid oxidase activity"/>
    <property type="evidence" value="ECO:0000250"/>
    <property type="project" value="UniProtKB"/>
</dbReference>
<dbReference type="GO" id="GO:0071949">
    <property type="term" value="F:FAD binding"/>
    <property type="evidence" value="ECO:0000250"/>
    <property type="project" value="UniProtKB"/>
</dbReference>
<dbReference type="GO" id="GO:0019478">
    <property type="term" value="P:D-amino acid catabolic process"/>
    <property type="evidence" value="ECO:0000250"/>
    <property type="project" value="UniProtKB"/>
</dbReference>
<dbReference type="FunFam" id="3.50.50.60:FF:000655">
    <property type="entry name" value="Amino acid dehydrogenase"/>
    <property type="match status" value="1"/>
</dbReference>
<dbReference type="Gene3D" id="3.30.9.10">
    <property type="entry name" value="D-Amino Acid Oxidase, subunit A, domain 2"/>
    <property type="match status" value="1"/>
</dbReference>
<dbReference type="Gene3D" id="3.50.50.60">
    <property type="entry name" value="FAD/NAD(P)-binding domain"/>
    <property type="match status" value="2"/>
</dbReference>
<dbReference type="InterPro" id="IPR006076">
    <property type="entry name" value="FAD-dep_OxRdtase"/>
</dbReference>
<dbReference type="InterPro" id="IPR036188">
    <property type="entry name" value="FAD/NAD-bd_sf"/>
</dbReference>
<dbReference type="PANTHER" id="PTHR13847:SF289">
    <property type="entry name" value="GLYCINE OXIDASE"/>
    <property type="match status" value="1"/>
</dbReference>
<dbReference type="PANTHER" id="PTHR13847">
    <property type="entry name" value="SARCOSINE DEHYDROGENASE-RELATED"/>
    <property type="match status" value="1"/>
</dbReference>
<dbReference type="Pfam" id="PF01266">
    <property type="entry name" value="DAO"/>
    <property type="match status" value="1"/>
</dbReference>
<dbReference type="SUPFAM" id="SSF54373">
    <property type="entry name" value="FAD-linked reductases, C-terminal domain"/>
    <property type="match status" value="1"/>
</dbReference>
<dbReference type="SUPFAM" id="SSF51905">
    <property type="entry name" value="FAD/NAD(P)-binding domain"/>
    <property type="match status" value="1"/>
</dbReference>
<name>DAO_BRADU</name>
<accession>Q89F89</accession>
<organism evidence="9">
    <name type="scientific">Bradyrhizobium diazoefficiens (strain JCM 10833 / BCRC 13528 / IAM 13628 / NBRC 14792 / USDA 110)</name>
    <dbReference type="NCBI Taxonomy" id="224911"/>
    <lineage>
        <taxon>Bacteria</taxon>
        <taxon>Pseudomonadati</taxon>
        <taxon>Pseudomonadota</taxon>
        <taxon>Alphaproteobacteria</taxon>
        <taxon>Hyphomicrobiales</taxon>
        <taxon>Nitrobacteraceae</taxon>
        <taxon>Bradyrhizobium</taxon>
    </lineage>
</organism>
<evidence type="ECO:0000250" key="1">
    <source>
        <dbReference type="UniProtKB" id="A5U3S4"/>
    </source>
</evidence>
<evidence type="ECO:0000250" key="2">
    <source>
        <dbReference type="UniProtKB" id="P00371"/>
    </source>
</evidence>
<evidence type="ECO:0000250" key="3">
    <source>
        <dbReference type="UniProtKB" id="P14920"/>
    </source>
</evidence>
<evidence type="ECO:0000250" key="4">
    <source>
        <dbReference type="UniProtKB" id="Q1AYM8"/>
    </source>
</evidence>
<evidence type="ECO:0000269" key="5">
    <source>
    </source>
</evidence>
<evidence type="ECO:0000303" key="6">
    <source>
    </source>
</evidence>
<evidence type="ECO:0000305" key="7"/>
<evidence type="ECO:0000312" key="8">
    <source>
        <dbReference type="EMBL" id="BAC52077.1"/>
    </source>
</evidence>
<evidence type="ECO:0000312" key="9">
    <source>
        <dbReference type="Proteomes" id="UP000002526"/>
    </source>
</evidence>
<sequence length="421" mass="45464">MPEGRHVAIIGAGAVGVISAIEALREGHRVTLIDPGEPGGEQAASYGNAGWLSSHSVIPPAEPGIWKKVPGYLMDPLGPLAIRWSYLPKALPWLIKYLLSGWTEARVEKTAFALRDLLKDAPLLHRKLAEEAGVPELIERNGVMHAFPSRGNFDNDLGWRLRKKVGVAWLELNADEMRQREPDLHPRYSFGVVVEEAGRCRDPGAYVAALANHALASGAKLVRAKATGLKLSGNKLVAVVTETGEIACDAAVVAAGARSKQLTASVGDPLPLETERGYHVMIENPETGPRSSIMASDAKMVVNWTNKGLRAAGTVEIAGLEAAPNWKRAEILRDHLFSMFPKLPRDIPASRIKTWFGHRPSMPDGLPCIGHARASRDIVYAFGHGHVGLVGSARTGRLVAQLLSGKQPEIPLAPFSPTRFL</sequence>
<feature type="chain" id="PRO_0000460378" description="D-amino-acid oxidase">
    <location>
        <begin position="1"/>
        <end position="421"/>
    </location>
</feature>
<feature type="binding site" evidence="3">
    <location>
        <position position="12"/>
    </location>
    <ligand>
        <name>FAD</name>
        <dbReference type="ChEBI" id="CHEBI:57692"/>
    </ligand>
</feature>
<feature type="binding site" evidence="3">
    <location>
        <position position="13"/>
    </location>
    <ligand>
        <name>FAD</name>
        <dbReference type="ChEBI" id="CHEBI:57692"/>
    </ligand>
</feature>
<feature type="binding site" evidence="3">
    <location>
        <position position="14"/>
    </location>
    <ligand>
        <name>FAD</name>
        <dbReference type="ChEBI" id="CHEBI:57692"/>
    </ligand>
</feature>
<feature type="binding site" evidence="3">
    <location>
        <position position="15"/>
    </location>
    <ligand>
        <name>FAD</name>
        <dbReference type="ChEBI" id="CHEBI:57692"/>
    </ligand>
</feature>
<feature type="binding site" evidence="2">
    <location>
        <position position="47"/>
    </location>
    <ligand>
        <name>FAD</name>
        <dbReference type="ChEBI" id="CHEBI:57692"/>
    </ligand>
</feature>
<feature type="binding site" evidence="3">
    <location>
        <position position="64"/>
    </location>
    <ligand>
        <name>FAD</name>
        <dbReference type="ChEBI" id="CHEBI:57692"/>
    </ligand>
</feature>
<feature type="binding site" evidence="3">
    <location>
        <position position="65"/>
    </location>
    <ligand>
        <name>FAD</name>
        <dbReference type="ChEBI" id="CHEBI:57692"/>
    </ligand>
</feature>
<feature type="binding site" evidence="2">
    <location>
        <position position="225"/>
    </location>
    <ligand>
        <name>FAD</name>
        <dbReference type="ChEBI" id="CHEBI:57692"/>
    </ligand>
</feature>
<feature type="binding site" evidence="3">
    <location>
        <position position="226"/>
    </location>
    <ligand>
        <name>FAD</name>
        <dbReference type="ChEBI" id="CHEBI:57692"/>
    </ligand>
</feature>
<feature type="binding site" evidence="2">
    <location>
        <position position="359"/>
    </location>
    <ligand>
        <name>D-proline</name>
        <dbReference type="ChEBI" id="CHEBI:57726"/>
    </ligand>
</feature>
<feature type="binding site" evidence="3">
    <location>
        <position position="359"/>
    </location>
    <ligand>
        <name>D-serine</name>
        <dbReference type="ChEBI" id="CHEBI:35247"/>
    </ligand>
</feature>
<feature type="binding site" evidence="3">
    <location>
        <position position="359"/>
    </location>
    <ligand>
        <name>FAD</name>
        <dbReference type="ChEBI" id="CHEBI:57692"/>
    </ligand>
</feature>
<feature type="binding site" evidence="3">
    <location>
        <position position="385"/>
    </location>
    <ligand>
        <name>FAD</name>
        <dbReference type="ChEBI" id="CHEBI:57692"/>
    </ligand>
</feature>
<feature type="binding site" evidence="3">
    <location>
        <position position="388"/>
    </location>
    <ligand>
        <name>FAD</name>
        <dbReference type="ChEBI" id="CHEBI:57692"/>
    </ligand>
</feature>
<feature type="binding site" evidence="3">
    <location>
        <position position="389"/>
    </location>
    <ligand>
        <name>FAD</name>
        <dbReference type="ChEBI" id="CHEBI:57692"/>
    </ligand>
</feature>
<proteinExistence type="evidence at protein level"/>
<keyword id="KW-0134">Cell wall</keyword>
<keyword id="KW-0963">Cytoplasm</keyword>
<keyword id="KW-0274">FAD</keyword>
<keyword id="KW-0285">Flavoprotein</keyword>
<keyword id="KW-0560">Oxidoreductase</keyword>
<keyword id="KW-1185">Reference proteome</keyword>
<keyword id="KW-0964">Secreted</keyword>
<gene>
    <name evidence="7" type="primary">dao</name>
    <name evidence="8" type="ordered locus">bll6812</name>
</gene>
<reference evidence="9" key="1">
    <citation type="journal article" date="2002" name="DNA Res.">
        <title>Complete genomic sequence of nitrogen-fixing symbiotic bacterium Bradyrhizobium japonicum USDA110.</title>
        <authorList>
            <person name="Kaneko T."/>
            <person name="Nakamura Y."/>
            <person name="Sato S."/>
            <person name="Minamisawa K."/>
            <person name="Uchiumi T."/>
            <person name="Sasamoto S."/>
            <person name="Watanabe A."/>
            <person name="Idesawa K."/>
            <person name="Iriguchi M."/>
            <person name="Kawashima K."/>
            <person name="Kohara M."/>
            <person name="Matsumoto M."/>
            <person name="Shimpo S."/>
            <person name="Tsuruoka H."/>
            <person name="Wada T."/>
            <person name="Yamada M."/>
            <person name="Tabata S."/>
        </authorList>
    </citation>
    <scope>NUCLEOTIDE SEQUENCE [LARGE SCALE GENOMIC DNA]</scope>
    <source>
        <strain evidence="9">JCM 10833 / BCRC 13528 / IAM 13628 / NBRC 14792 / USDA 110</strain>
    </source>
</reference>
<reference evidence="7" key="2">
    <citation type="journal article" date="2015" name="Plant Cell Rep.">
        <title>Overexpression of D-amino acid oxidase from Bradyrhizobium japonicum, enhances resistance to glyphosate in Arabidopsis thaliana.</title>
        <authorList>
            <person name="Han H."/>
            <person name="Zhu B."/>
            <person name="Fu X."/>
            <person name="You S."/>
            <person name="Wang B."/>
            <person name="Li Z."/>
            <person name="Zhao W."/>
            <person name="Peng R."/>
            <person name="Yao Q."/>
        </authorList>
    </citation>
    <scope>BIOTECHNOLOGY</scope>
</reference>
<protein>
    <recommendedName>
        <fullName evidence="6">D-amino-acid oxidase</fullName>
        <shortName evidence="7">DAAO</shortName>
        <shortName evidence="7">DAMOX</shortName>
        <shortName evidence="7">DAO</shortName>
        <ecNumber evidence="4">1.4.3.3</ecNumber>
    </recommendedName>
</protein>
<comment type="function">
    <text evidence="4">Catalyzes the oxidative deamination of D-amino acids with broad substrate specificity.</text>
</comment>
<comment type="catalytic activity">
    <reaction evidence="4">
        <text>a D-alpha-amino acid + O2 + H2O = a 2-oxocarboxylate + H2O2 + NH4(+)</text>
        <dbReference type="Rhea" id="RHEA:21816"/>
        <dbReference type="ChEBI" id="CHEBI:15377"/>
        <dbReference type="ChEBI" id="CHEBI:15379"/>
        <dbReference type="ChEBI" id="CHEBI:16240"/>
        <dbReference type="ChEBI" id="CHEBI:28938"/>
        <dbReference type="ChEBI" id="CHEBI:35179"/>
        <dbReference type="ChEBI" id="CHEBI:59871"/>
        <dbReference type="EC" id="1.4.3.3"/>
    </reaction>
    <physiologicalReaction direction="left-to-right" evidence="4">
        <dbReference type="Rhea" id="RHEA:21817"/>
    </physiologicalReaction>
</comment>
<comment type="cofactor">
    <cofactor evidence="4">
        <name>FAD</name>
        <dbReference type="ChEBI" id="CHEBI:57692"/>
    </cofactor>
</comment>
<comment type="subcellular location">
    <subcellularLocation>
        <location evidence="1">Cytoplasm</location>
    </subcellularLocation>
    <subcellularLocation>
        <location evidence="1">Secreted</location>
        <location evidence="1">Cell wall</location>
    </subcellularLocation>
</comment>
<comment type="biotechnology">
    <text evidence="5">Has potential use as a glyphosate-resistance transgene in crop production; can metabolize the herbicide glyphosate to yield AMPA and glyoxylate and confers glyphosate resistance to A.thaliana.</text>
</comment>
<comment type="similarity">
    <text evidence="7">Belongs to the DAMOX/DASOX family.</text>
</comment>